<reference key="1">
    <citation type="journal article" date="1996" name="J. Virol.">
        <title>The complete DNA sequence and genomic organization of the avian adenovirus CELO.</title>
        <authorList>
            <person name="Chiocca S."/>
            <person name="Kurzbauer R."/>
            <person name="Schaffner G."/>
            <person name="Baker A."/>
            <person name="Mautner V."/>
            <person name="Cotten M."/>
        </authorList>
    </citation>
    <scope>NUCLEOTIDE SEQUENCE [LARGE SCALE GENOMIC DNA]</scope>
</reference>
<comment type="function">
    <text evidence="1">Plays a role in the elongation phase of viral strand displacement replication by unwinding the template in an ATP-independent fashion, employing its capacity to form multimers. Also enhances the rate of initiation. Released from template upon second strand synthesis. Assembles in complex with viral pTP, viral pol, host NFIA and host POU2F1/OCT1 on viral origin of replication. Covers the whole ssDNA genome during synthesis. The complementary strand synthesis induces its relese from DNA template. May inhibit cellular transcription mediated by the interaction between host SRCAP and CBP.</text>
</comment>
<comment type="subunit">
    <text evidence="1">Homomultimerizes on viral ssDNA bound to pTP. Forms a initiation complex with viral polymerase, pTP and hosts NFIA and POU2F1/OCT1. Interacts with host SRCAP.</text>
</comment>
<comment type="subcellular location">
    <subcellularLocation>
        <location evidence="1">Host nucleus</location>
    </subcellularLocation>
    <text evidence="1">Accumulates in infected cells.</text>
</comment>
<comment type="domain">
    <text evidence="1">The C-terminal arm bridges DBP molecules together, thereby creating a chain.</text>
</comment>
<comment type="similarity">
    <text evidence="1">Belongs to the adenoviridae E2A DNA-binding protein family.</text>
</comment>
<accession>Q64759</accession>
<sequence>MERTPKRAHGFRSTKPVKRTAEVMMEEEEEEVEVVAPGRGATRKKVSRREESPSPVRRVTRRRETVVDDEENASDEESPEAPLSDPVVYGAQRAMATVASICEALDLQWQGASVRPDDSIWTKMGGTYVRKKHPEFRLTFSSYDSFNAQVGRFLAAVIYSRAGLEPKFVPGGAHVWRHGWFPALQEPFPKCMHGVDMVTKPRTVELNPSSEAGKRALAEQNGVIEKNRFGRQVVVLRFDANAVCYKDQEHSGFPHPHAHGSCAMVFSDAAKAVSAMRHDIDWTKALYPNADKRRAEECVLISTNCNCNYASDRAISGRQFCKMTPYKLNGTDDITRDMVESRPDMKAHKKNPHTMVFTCCNPQAASGGAGRGLKKTEKTCAWRLSAMDLRYAYVFATELFTAVMGSSEPTHVPEFRWNESYAFKTEVLAPVSPIASDDPFA</sequence>
<gene>
    <name evidence="1" type="primary">DBP</name>
</gene>
<evidence type="ECO:0000255" key="1">
    <source>
        <dbReference type="HAMAP-Rule" id="MF_04054"/>
    </source>
</evidence>
<evidence type="ECO:0000256" key="2">
    <source>
        <dbReference type="SAM" id="MobiDB-lite"/>
    </source>
</evidence>
<organism>
    <name type="scientific">Fowl adenovirus A serotype 1 (strain CELO / Phelps)</name>
    <name type="common">FAdV-1</name>
    <name type="synonym">Avian adenovirus gal1 (strain Phelps)</name>
    <dbReference type="NCBI Taxonomy" id="10553"/>
    <lineage>
        <taxon>Viruses</taxon>
        <taxon>Varidnaviria</taxon>
        <taxon>Bamfordvirae</taxon>
        <taxon>Preplasmiviricota</taxon>
        <taxon>Tectiliviricetes</taxon>
        <taxon>Rowavirales</taxon>
        <taxon>Adenoviridae</taxon>
        <taxon>Aviadenovirus</taxon>
        <taxon>Fowl aviadenovirus A</taxon>
    </lineage>
</organism>
<name>DNB2_ADEG1</name>
<protein>
    <recommendedName>
        <fullName evidence="1">DNA-binding protein</fullName>
        <shortName evidence="1">DBP</shortName>
    </recommendedName>
    <alternativeName>
        <fullName evidence="1">Early 2A protein</fullName>
    </alternativeName>
    <alternativeName>
        <fullName evidence="1">Early E2A DNA-binding protein</fullName>
    </alternativeName>
</protein>
<dbReference type="EMBL" id="U46933">
    <property type="protein sequence ID" value="AAC54914.1"/>
    <property type="molecule type" value="Genomic_DNA"/>
</dbReference>
<dbReference type="RefSeq" id="NP_043888.1">
    <property type="nucleotide sequence ID" value="NC_001720.1"/>
</dbReference>
<dbReference type="SMR" id="Q64759"/>
<dbReference type="KEGG" id="vg:1733479"/>
<dbReference type="Proteomes" id="UP000001594">
    <property type="component" value="Segment"/>
</dbReference>
<dbReference type="GO" id="GO:0042025">
    <property type="term" value="C:host cell nucleus"/>
    <property type="evidence" value="ECO:0007669"/>
    <property type="project" value="UniProtKB-SubCell"/>
</dbReference>
<dbReference type="GO" id="GO:0019028">
    <property type="term" value="C:viral capsid"/>
    <property type="evidence" value="ECO:0007669"/>
    <property type="project" value="UniProtKB-UniRule"/>
</dbReference>
<dbReference type="GO" id="GO:0003677">
    <property type="term" value="F:DNA binding"/>
    <property type="evidence" value="ECO:0007669"/>
    <property type="project" value="UniProtKB-UniRule"/>
</dbReference>
<dbReference type="GO" id="GO:0008270">
    <property type="term" value="F:zinc ion binding"/>
    <property type="evidence" value="ECO:0007669"/>
    <property type="project" value="UniProtKB-UniRule"/>
</dbReference>
<dbReference type="GO" id="GO:0006260">
    <property type="term" value="P:DNA replication"/>
    <property type="evidence" value="ECO:0007669"/>
    <property type="project" value="UniProtKB-KW"/>
</dbReference>
<dbReference type="GO" id="GO:0006351">
    <property type="term" value="P:DNA-templated transcription"/>
    <property type="evidence" value="ECO:0007669"/>
    <property type="project" value="UniProtKB-UniRule"/>
</dbReference>
<dbReference type="GO" id="GO:0045740">
    <property type="term" value="P:positive regulation of DNA replication"/>
    <property type="evidence" value="ECO:0007669"/>
    <property type="project" value="UniProtKB-UniRule"/>
</dbReference>
<dbReference type="GO" id="GO:0039687">
    <property type="term" value="P:viral DNA strand displacement replication"/>
    <property type="evidence" value="ECO:0007669"/>
    <property type="project" value="UniProtKB-UniRule"/>
</dbReference>
<dbReference type="Gene3D" id="3.90.148.10">
    <property type="entry name" value="Adenovirus DNA-binding, C-terminal domain superfamily/Adenovirus DNA-binding, zinc binding domain"/>
    <property type="match status" value="1"/>
</dbReference>
<dbReference type="Gene3D" id="1.10.269.10">
    <property type="entry name" value="Adenovirus DNA-binding, N-terminal domain"/>
    <property type="match status" value="1"/>
</dbReference>
<dbReference type="HAMAP" id="MF_04054">
    <property type="entry name" value="ADV_DNB2"/>
    <property type="match status" value="1"/>
</dbReference>
<dbReference type="InterPro" id="IPR036367">
    <property type="entry name" value="Ad_DBP_C_sf"/>
</dbReference>
<dbReference type="InterPro" id="IPR036368">
    <property type="entry name" value="ADBP_zn-bd_sf"/>
</dbReference>
<dbReference type="InterPro" id="IPR003176">
    <property type="entry name" value="Adenovirus_DNA-bd_a"/>
</dbReference>
<dbReference type="InterPro" id="IPR036362">
    <property type="entry name" value="Adenovirus_DNA-bd_N_sf"/>
</dbReference>
<dbReference type="InterPro" id="IPR005376">
    <property type="entry name" value="Adenovirus_DNA-bd_zn-bd"/>
</dbReference>
<dbReference type="InterPro" id="IPR037540">
    <property type="entry name" value="ADV_DNB2"/>
</dbReference>
<dbReference type="Pfam" id="PF02236">
    <property type="entry name" value="Viral_DNA_bi"/>
    <property type="match status" value="1"/>
</dbReference>
<dbReference type="Pfam" id="PF03728">
    <property type="entry name" value="Viral_DNA_Zn_bi"/>
    <property type="match status" value="2"/>
</dbReference>
<dbReference type="SUPFAM" id="SSF47724">
    <property type="entry name" value="Domain of early E2A DNA-binding protein, ADDBP"/>
    <property type="match status" value="1"/>
</dbReference>
<dbReference type="SUPFAM" id="SSF57917">
    <property type="entry name" value="Zn-binding domains of ADDBP"/>
    <property type="match status" value="2"/>
</dbReference>
<keyword id="KW-0235">DNA replication</keyword>
<keyword id="KW-0238">DNA-binding</keyword>
<keyword id="KW-0244">Early protein</keyword>
<keyword id="KW-1048">Host nucleus</keyword>
<keyword id="KW-0945">Host-virus interaction</keyword>
<keyword id="KW-0479">Metal-binding</keyword>
<keyword id="KW-0597">Phosphoprotein</keyword>
<keyword id="KW-1185">Reference proteome</keyword>
<keyword id="KW-1194">Viral DNA replication</keyword>
<keyword id="KW-0862">Zinc</keyword>
<proteinExistence type="inferred from homology"/>
<organismHost>
    <name type="scientific">Galliformes</name>
    <dbReference type="NCBI Taxonomy" id="8976"/>
</organismHost>
<feature type="chain" id="PRO_0000221686" description="DNA-binding protein">
    <location>
        <begin position="1"/>
        <end position="441"/>
    </location>
</feature>
<feature type="region of interest" description="Disordered" evidence="2">
    <location>
        <begin position="1"/>
        <end position="85"/>
    </location>
</feature>
<feature type="region of interest" description="Flexible loop" evidence="1">
    <location>
        <begin position="204"/>
        <end position="236"/>
    </location>
</feature>
<feature type="region of interest" description="C-terminal arm, DBP binding" evidence="1">
    <location>
        <begin position="426"/>
        <end position="441"/>
    </location>
</feature>
<feature type="compositionally biased region" description="Basic residues" evidence="2">
    <location>
        <begin position="1"/>
        <end position="18"/>
    </location>
</feature>
<feature type="compositionally biased region" description="Acidic residues" evidence="2">
    <location>
        <begin position="24"/>
        <end position="33"/>
    </location>
</feature>
<feature type="compositionally biased region" description="Acidic residues" evidence="2">
    <location>
        <begin position="67"/>
        <end position="79"/>
    </location>
</feature>
<feature type="binding site" evidence="1">
    <location>
        <position position="191"/>
    </location>
    <ligand>
        <name>Zn(2+)</name>
        <dbReference type="ChEBI" id="CHEBI:29105"/>
        <label>1</label>
    </ligand>
</feature>
<feature type="binding site" evidence="1">
    <location>
        <position position="193"/>
    </location>
    <ligand>
        <name>Zn(2+)</name>
        <dbReference type="ChEBI" id="CHEBI:29105"/>
        <label>1</label>
    </ligand>
</feature>
<feature type="binding site" evidence="1">
    <location>
        <position position="244"/>
    </location>
    <ligand>
        <name>Zn(2+)</name>
        <dbReference type="ChEBI" id="CHEBI:29105"/>
        <label>1</label>
    </ligand>
</feature>
<feature type="binding site" evidence="1">
    <location>
        <position position="262"/>
    </location>
    <ligand>
        <name>Zn(2+)</name>
        <dbReference type="ChEBI" id="CHEBI:29105"/>
        <label>1</label>
    </ligand>
</feature>
<feature type="binding site" evidence="1">
    <location>
        <position position="305"/>
    </location>
    <ligand>
        <name>Zn(2+)</name>
        <dbReference type="ChEBI" id="CHEBI:29105"/>
        <label>2</label>
    </ligand>
</feature>
<feature type="binding site" evidence="1">
    <location>
        <position position="307"/>
    </location>
    <ligand>
        <name>Zn(2+)</name>
        <dbReference type="ChEBI" id="CHEBI:29105"/>
        <label>2</label>
    </ligand>
</feature>
<feature type="binding site" evidence="1">
    <location>
        <position position="359"/>
    </location>
    <ligand>
        <name>Zn(2+)</name>
        <dbReference type="ChEBI" id="CHEBI:29105"/>
        <label>2</label>
    </ligand>
</feature>
<feature type="binding site" evidence="1">
    <location>
        <position position="380"/>
    </location>
    <ligand>
        <name>Zn(2+)</name>
        <dbReference type="ChEBI" id="CHEBI:29105"/>
        <label>2</label>
    </ligand>
</feature>